<gene>
    <name type="ordered locus">At1g57690</name>
    <name type="ORF">T8L23.16</name>
</gene>
<protein>
    <recommendedName>
        <fullName>Putative F-box protein At1g57690</fullName>
    </recommendedName>
</protein>
<keyword id="KW-1185">Reference proteome</keyword>
<name>FB63_ARATH</name>
<organism>
    <name type="scientific">Arabidopsis thaliana</name>
    <name type="common">Mouse-ear cress</name>
    <dbReference type="NCBI Taxonomy" id="3702"/>
    <lineage>
        <taxon>Eukaryota</taxon>
        <taxon>Viridiplantae</taxon>
        <taxon>Streptophyta</taxon>
        <taxon>Embryophyta</taxon>
        <taxon>Tracheophyta</taxon>
        <taxon>Spermatophyta</taxon>
        <taxon>Magnoliopsida</taxon>
        <taxon>eudicotyledons</taxon>
        <taxon>Gunneridae</taxon>
        <taxon>Pentapetalae</taxon>
        <taxon>rosids</taxon>
        <taxon>malvids</taxon>
        <taxon>Brassicales</taxon>
        <taxon>Brassicaceae</taxon>
        <taxon>Camelineae</taxon>
        <taxon>Arabidopsis</taxon>
    </lineage>
</organism>
<reference key="1">
    <citation type="journal article" date="2000" name="Nature">
        <title>Sequence and analysis of chromosome 1 of the plant Arabidopsis thaliana.</title>
        <authorList>
            <person name="Theologis A."/>
            <person name="Ecker J.R."/>
            <person name="Palm C.J."/>
            <person name="Federspiel N.A."/>
            <person name="Kaul S."/>
            <person name="White O."/>
            <person name="Alonso J."/>
            <person name="Altafi H."/>
            <person name="Araujo R."/>
            <person name="Bowman C.L."/>
            <person name="Brooks S.Y."/>
            <person name="Buehler E."/>
            <person name="Chan A."/>
            <person name="Chao Q."/>
            <person name="Chen H."/>
            <person name="Cheuk R.F."/>
            <person name="Chin C.W."/>
            <person name="Chung M.K."/>
            <person name="Conn L."/>
            <person name="Conway A.B."/>
            <person name="Conway A.R."/>
            <person name="Creasy T.H."/>
            <person name="Dewar K."/>
            <person name="Dunn P."/>
            <person name="Etgu P."/>
            <person name="Feldblyum T.V."/>
            <person name="Feng J.-D."/>
            <person name="Fong B."/>
            <person name="Fujii C.Y."/>
            <person name="Gill J.E."/>
            <person name="Goldsmith A.D."/>
            <person name="Haas B."/>
            <person name="Hansen N.F."/>
            <person name="Hughes B."/>
            <person name="Huizar L."/>
            <person name="Hunter J.L."/>
            <person name="Jenkins J."/>
            <person name="Johnson-Hopson C."/>
            <person name="Khan S."/>
            <person name="Khaykin E."/>
            <person name="Kim C.J."/>
            <person name="Koo H.L."/>
            <person name="Kremenetskaia I."/>
            <person name="Kurtz D.B."/>
            <person name="Kwan A."/>
            <person name="Lam B."/>
            <person name="Langin-Hooper S."/>
            <person name="Lee A."/>
            <person name="Lee J.M."/>
            <person name="Lenz C.A."/>
            <person name="Li J.H."/>
            <person name="Li Y.-P."/>
            <person name="Lin X."/>
            <person name="Liu S.X."/>
            <person name="Liu Z.A."/>
            <person name="Luros J.S."/>
            <person name="Maiti R."/>
            <person name="Marziali A."/>
            <person name="Militscher J."/>
            <person name="Miranda M."/>
            <person name="Nguyen M."/>
            <person name="Nierman W.C."/>
            <person name="Osborne B.I."/>
            <person name="Pai G."/>
            <person name="Peterson J."/>
            <person name="Pham P.K."/>
            <person name="Rizzo M."/>
            <person name="Rooney T."/>
            <person name="Rowley D."/>
            <person name="Sakano H."/>
            <person name="Salzberg S.L."/>
            <person name="Schwartz J.R."/>
            <person name="Shinn P."/>
            <person name="Southwick A.M."/>
            <person name="Sun H."/>
            <person name="Tallon L.J."/>
            <person name="Tambunga G."/>
            <person name="Toriumi M.J."/>
            <person name="Town C.D."/>
            <person name="Utterback T."/>
            <person name="Van Aken S."/>
            <person name="Vaysberg M."/>
            <person name="Vysotskaia V.S."/>
            <person name="Walker M."/>
            <person name="Wu D."/>
            <person name="Yu G."/>
            <person name="Fraser C.M."/>
            <person name="Venter J.C."/>
            <person name="Davis R.W."/>
        </authorList>
    </citation>
    <scope>NUCLEOTIDE SEQUENCE [LARGE SCALE GENOMIC DNA]</scope>
    <source>
        <strain>cv. Columbia</strain>
    </source>
</reference>
<reference key="2">
    <citation type="journal article" date="2017" name="Plant J.">
        <title>Araport11: a complete reannotation of the Arabidopsis thaliana reference genome.</title>
        <authorList>
            <person name="Cheng C.Y."/>
            <person name="Krishnakumar V."/>
            <person name="Chan A.P."/>
            <person name="Thibaud-Nissen F."/>
            <person name="Schobel S."/>
            <person name="Town C.D."/>
        </authorList>
    </citation>
    <scope>GENOME REANNOTATION</scope>
    <source>
        <strain>cv. Columbia</strain>
    </source>
</reference>
<dbReference type="EMBL" id="AC079733">
    <property type="protein sequence ID" value="AAG50750.1"/>
    <property type="molecule type" value="Genomic_DNA"/>
</dbReference>
<dbReference type="EMBL" id="CP002684">
    <property type="protein sequence ID" value="AEE33453.1"/>
    <property type="molecule type" value="Genomic_DNA"/>
</dbReference>
<dbReference type="PIR" id="C96611">
    <property type="entry name" value="C96611"/>
</dbReference>
<dbReference type="RefSeq" id="NP_176082.1">
    <property type="nucleotide sequence ID" value="NM_104566.1"/>
</dbReference>
<dbReference type="FunCoup" id="Q9FVT4">
    <property type="interactions" value="501"/>
</dbReference>
<dbReference type="iPTMnet" id="Q9FVT4"/>
<dbReference type="PaxDb" id="3702-AT1G57690.1"/>
<dbReference type="EnsemblPlants" id="AT1G57690.1">
    <property type="protein sequence ID" value="AT1G57690.1"/>
    <property type="gene ID" value="AT1G57690"/>
</dbReference>
<dbReference type="GeneID" id="842145"/>
<dbReference type="Gramene" id="AT1G57690.1">
    <property type="protein sequence ID" value="AT1G57690.1"/>
    <property type="gene ID" value="AT1G57690"/>
</dbReference>
<dbReference type="KEGG" id="ath:AT1G57690"/>
<dbReference type="Araport" id="AT1G57690"/>
<dbReference type="TAIR" id="AT1G57690"/>
<dbReference type="HOGENOM" id="CLU_010721_5_0_1"/>
<dbReference type="InParanoid" id="Q9FVT4"/>
<dbReference type="OMA" id="ANVDICT"/>
<dbReference type="PhylomeDB" id="Q9FVT4"/>
<dbReference type="PRO" id="PR:Q9FVT4"/>
<dbReference type="Proteomes" id="UP000006548">
    <property type="component" value="Chromosome 1"/>
</dbReference>
<dbReference type="CDD" id="cd22160">
    <property type="entry name" value="F-box_AtFBL13-like"/>
    <property type="match status" value="1"/>
</dbReference>
<dbReference type="Gene3D" id="3.80.10.10">
    <property type="entry name" value="Ribonuclease Inhibitor"/>
    <property type="match status" value="1"/>
</dbReference>
<dbReference type="InterPro" id="IPR036047">
    <property type="entry name" value="F-box-like_dom_sf"/>
</dbReference>
<dbReference type="InterPro" id="IPR053781">
    <property type="entry name" value="F-box_AtFBL13-like"/>
</dbReference>
<dbReference type="InterPro" id="IPR001810">
    <property type="entry name" value="F-box_dom"/>
</dbReference>
<dbReference type="InterPro" id="IPR044997">
    <property type="entry name" value="F-box_plant"/>
</dbReference>
<dbReference type="InterPro" id="IPR032675">
    <property type="entry name" value="LRR_dom_sf"/>
</dbReference>
<dbReference type="PANTHER" id="PTHR32153">
    <property type="entry name" value="OJ000223_09.16 PROTEIN"/>
    <property type="match status" value="1"/>
</dbReference>
<dbReference type="Pfam" id="PF00646">
    <property type="entry name" value="F-box"/>
    <property type="match status" value="1"/>
</dbReference>
<dbReference type="SUPFAM" id="SSF81383">
    <property type="entry name" value="F-box domain"/>
    <property type="match status" value="1"/>
</dbReference>
<dbReference type="SUPFAM" id="SSF52047">
    <property type="entry name" value="RNI-like"/>
    <property type="match status" value="1"/>
</dbReference>
<feature type="chain" id="PRO_0000283337" description="Putative F-box protein At1g57690">
    <location>
        <begin position="1"/>
        <end position="330"/>
    </location>
</feature>
<feature type="domain" description="F-box">
    <location>
        <begin position="25"/>
        <end position="72"/>
    </location>
</feature>
<proteinExistence type="predicted"/>
<sequence length="330" mass="37940">MADNSATRVRVPSDRNSRRKIKGEVDIISSLPDVILQHILFSFQTKYAIRTSVLSKRWRHEADAINKALSQYTAPKMMNFHLKINKNNSLHHIKKWTEFAMSRNVENMSLDVRFRSNKIPRFYEINSSVKSLSHRLDLHDVIPRHGVSWTSLKKFSLSYCGLPDESAKILSGCPILEWPMQIVAPQIHCLKLRNTQLPCTLVDVSSLTEAEVLDIIIFPVNLSYNADFLHATMLEMLKKLKNVEKLTFSGSYLQNLSVAEKRGVPFPMFKVKALTLEMKHFVISDIERMLQSSPNLKKLTVRAKDNTGKYLYRYFARLESGSMLELKKGV</sequence>
<accession>Q9FVT4</accession>